<comment type="catalytic activity">
    <reaction evidence="1">
        <text>tRNA(His) + L-histidine + ATP = L-histidyl-tRNA(His) + AMP + diphosphate + H(+)</text>
        <dbReference type="Rhea" id="RHEA:17313"/>
        <dbReference type="Rhea" id="RHEA-COMP:9665"/>
        <dbReference type="Rhea" id="RHEA-COMP:9689"/>
        <dbReference type="ChEBI" id="CHEBI:15378"/>
        <dbReference type="ChEBI" id="CHEBI:30616"/>
        <dbReference type="ChEBI" id="CHEBI:33019"/>
        <dbReference type="ChEBI" id="CHEBI:57595"/>
        <dbReference type="ChEBI" id="CHEBI:78442"/>
        <dbReference type="ChEBI" id="CHEBI:78527"/>
        <dbReference type="ChEBI" id="CHEBI:456215"/>
        <dbReference type="EC" id="6.1.1.21"/>
    </reaction>
</comment>
<comment type="subunit">
    <text evidence="1">Homodimer.</text>
</comment>
<comment type="subcellular location">
    <subcellularLocation>
        <location evidence="1">Cytoplasm</location>
    </subcellularLocation>
</comment>
<comment type="similarity">
    <text evidence="1">Belongs to the class-II aminoacyl-tRNA synthetase family.</text>
</comment>
<accession>B6IZN1</accession>
<sequence length="421" mass="47827">MTKSIQAIRGMSDTLPEEIPYWSFLENACRSVVSAYHYREIRFPVVEQTALFKRTIGEATDIVEKEMYTFTDRNGDSLTLRPEGTAGCVRAGIQNGLFYNQIQRLWYLGPMFRHERPQKGRYRQFYQLGVETYGMAGAPIEAELIFMCLRLWKALGLESCIHLELNTLGTLDSRNAYRQALVTYLQSREKELDEDSRRRLHTNPLRILDSKNPDLQPLLAEAPKLIDYLDETSRRHFDQLRSLLDQAEVPFIVNPTLVRGLDYYTHTVFEWVTDQLGAQGTVCAGGRYDNLVELLGGKSTPAAGFAAGLERLVLLLRGVQECLDKIDIYVVIAGEAVIQEGLLMTEQLRNVLPEWVIEADLSGSSLKSQFKRADKSGAKWALVIGEEEIKTNTVTLKHLRETVPQKNLTRDTLISYLKSEG</sequence>
<organism>
    <name type="scientific">Coxiella burnetii (strain CbuG_Q212)</name>
    <name type="common">Coxiella burnetii (strain Q212)</name>
    <dbReference type="NCBI Taxonomy" id="434923"/>
    <lineage>
        <taxon>Bacteria</taxon>
        <taxon>Pseudomonadati</taxon>
        <taxon>Pseudomonadota</taxon>
        <taxon>Gammaproteobacteria</taxon>
        <taxon>Legionellales</taxon>
        <taxon>Coxiellaceae</taxon>
        <taxon>Coxiella</taxon>
    </lineage>
</organism>
<dbReference type="EC" id="6.1.1.21" evidence="1"/>
<dbReference type="EMBL" id="CP001019">
    <property type="protein sequence ID" value="ACJ18159.1"/>
    <property type="molecule type" value="Genomic_DNA"/>
</dbReference>
<dbReference type="RefSeq" id="WP_012569921.1">
    <property type="nucleotide sequence ID" value="NC_011527.1"/>
</dbReference>
<dbReference type="SMR" id="B6IZN1"/>
<dbReference type="KEGG" id="cbg:CbuG_0763"/>
<dbReference type="HOGENOM" id="CLU_025113_1_1_6"/>
<dbReference type="GO" id="GO:0005737">
    <property type="term" value="C:cytoplasm"/>
    <property type="evidence" value="ECO:0007669"/>
    <property type="project" value="UniProtKB-SubCell"/>
</dbReference>
<dbReference type="GO" id="GO:0005524">
    <property type="term" value="F:ATP binding"/>
    <property type="evidence" value="ECO:0007669"/>
    <property type="project" value="UniProtKB-UniRule"/>
</dbReference>
<dbReference type="GO" id="GO:0004821">
    <property type="term" value="F:histidine-tRNA ligase activity"/>
    <property type="evidence" value="ECO:0007669"/>
    <property type="project" value="UniProtKB-UniRule"/>
</dbReference>
<dbReference type="GO" id="GO:0006427">
    <property type="term" value="P:histidyl-tRNA aminoacylation"/>
    <property type="evidence" value="ECO:0007669"/>
    <property type="project" value="UniProtKB-UniRule"/>
</dbReference>
<dbReference type="CDD" id="cd00773">
    <property type="entry name" value="HisRS-like_core"/>
    <property type="match status" value="1"/>
</dbReference>
<dbReference type="CDD" id="cd00859">
    <property type="entry name" value="HisRS_anticodon"/>
    <property type="match status" value="1"/>
</dbReference>
<dbReference type="FunFam" id="3.30.930.10:FF:000005">
    <property type="entry name" value="Histidine--tRNA ligase"/>
    <property type="match status" value="1"/>
</dbReference>
<dbReference type="Gene3D" id="3.40.50.800">
    <property type="entry name" value="Anticodon-binding domain"/>
    <property type="match status" value="1"/>
</dbReference>
<dbReference type="Gene3D" id="3.30.930.10">
    <property type="entry name" value="Bira Bifunctional Protein, Domain 2"/>
    <property type="match status" value="1"/>
</dbReference>
<dbReference type="HAMAP" id="MF_00127">
    <property type="entry name" value="His_tRNA_synth"/>
    <property type="match status" value="1"/>
</dbReference>
<dbReference type="InterPro" id="IPR006195">
    <property type="entry name" value="aa-tRNA-synth_II"/>
</dbReference>
<dbReference type="InterPro" id="IPR045864">
    <property type="entry name" value="aa-tRNA-synth_II/BPL/LPL"/>
</dbReference>
<dbReference type="InterPro" id="IPR004154">
    <property type="entry name" value="Anticodon-bd"/>
</dbReference>
<dbReference type="InterPro" id="IPR036621">
    <property type="entry name" value="Anticodon-bd_dom_sf"/>
</dbReference>
<dbReference type="InterPro" id="IPR015807">
    <property type="entry name" value="His-tRNA-ligase"/>
</dbReference>
<dbReference type="InterPro" id="IPR041715">
    <property type="entry name" value="HisRS-like_core"/>
</dbReference>
<dbReference type="InterPro" id="IPR004516">
    <property type="entry name" value="HisRS/HisZ"/>
</dbReference>
<dbReference type="InterPro" id="IPR033656">
    <property type="entry name" value="HisRS_anticodon"/>
</dbReference>
<dbReference type="NCBIfam" id="TIGR00442">
    <property type="entry name" value="hisS"/>
    <property type="match status" value="1"/>
</dbReference>
<dbReference type="PANTHER" id="PTHR43707:SF1">
    <property type="entry name" value="HISTIDINE--TRNA LIGASE, MITOCHONDRIAL-RELATED"/>
    <property type="match status" value="1"/>
</dbReference>
<dbReference type="PANTHER" id="PTHR43707">
    <property type="entry name" value="HISTIDYL-TRNA SYNTHETASE"/>
    <property type="match status" value="1"/>
</dbReference>
<dbReference type="Pfam" id="PF03129">
    <property type="entry name" value="HGTP_anticodon"/>
    <property type="match status" value="1"/>
</dbReference>
<dbReference type="Pfam" id="PF13393">
    <property type="entry name" value="tRNA-synt_His"/>
    <property type="match status" value="1"/>
</dbReference>
<dbReference type="PIRSF" id="PIRSF001549">
    <property type="entry name" value="His-tRNA_synth"/>
    <property type="match status" value="1"/>
</dbReference>
<dbReference type="SUPFAM" id="SSF52954">
    <property type="entry name" value="Class II aaRS ABD-related"/>
    <property type="match status" value="1"/>
</dbReference>
<dbReference type="SUPFAM" id="SSF55681">
    <property type="entry name" value="Class II aaRS and biotin synthetases"/>
    <property type="match status" value="1"/>
</dbReference>
<dbReference type="PROSITE" id="PS50862">
    <property type="entry name" value="AA_TRNA_LIGASE_II"/>
    <property type="match status" value="1"/>
</dbReference>
<name>SYH_COXB2</name>
<reference key="1">
    <citation type="journal article" date="2009" name="Infect. Immun.">
        <title>Comparative genomics reveal extensive transposon-mediated genomic plasticity and diversity among potential effector proteins within the genus Coxiella.</title>
        <authorList>
            <person name="Beare P.A."/>
            <person name="Unsworth N."/>
            <person name="Andoh M."/>
            <person name="Voth D.E."/>
            <person name="Omsland A."/>
            <person name="Gilk S.D."/>
            <person name="Williams K.P."/>
            <person name="Sobral B.W."/>
            <person name="Kupko J.J. III"/>
            <person name="Porcella S.F."/>
            <person name="Samuel J.E."/>
            <person name="Heinzen R.A."/>
        </authorList>
    </citation>
    <scope>NUCLEOTIDE SEQUENCE [LARGE SCALE GENOMIC DNA]</scope>
    <source>
        <strain>CbuG_Q212</strain>
    </source>
</reference>
<protein>
    <recommendedName>
        <fullName evidence="1">Histidine--tRNA ligase</fullName>
        <ecNumber evidence="1">6.1.1.21</ecNumber>
    </recommendedName>
    <alternativeName>
        <fullName evidence="1">Histidyl-tRNA synthetase</fullName>
        <shortName evidence="1">HisRS</shortName>
    </alternativeName>
</protein>
<keyword id="KW-0030">Aminoacyl-tRNA synthetase</keyword>
<keyword id="KW-0067">ATP-binding</keyword>
<keyword id="KW-0963">Cytoplasm</keyword>
<keyword id="KW-0436">Ligase</keyword>
<keyword id="KW-0547">Nucleotide-binding</keyword>
<keyword id="KW-0648">Protein biosynthesis</keyword>
<feature type="chain" id="PRO_1000095545" description="Histidine--tRNA ligase">
    <location>
        <begin position="1"/>
        <end position="421"/>
    </location>
</feature>
<evidence type="ECO:0000255" key="1">
    <source>
        <dbReference type="HAMAP-Rule" id="MF_00127"/>
    </source>
</evidence>
<gene>
    <name evidence="1" type="primary">hisS</name>
    <name type="ordered locus">CbuG_0763</name>
</gene>
<proteinExistence type="inferred from homology"/>